<reference key="1">
    <citation type="journal article" date="2000" name="Curr. Genet.">
        <title>Evolutionary significance of an unusual chloroplast DNA inversion found in two basal angiosperm lineages.</title>
        <authorList>
            <person name="Graham S.W."/>
            <person name="Olmstead R.G."/>
        </authorList>
    </citation>
    <scope>NUCLEOTIDE SEQUENCE [GENOMIC DNA]</scope>
</reference>
<protein>
    <recommendedName>
        <fullName evidence="1">Cytochrome b559 subunit beta</fullName>
    </recommendedName>
    <alternativeName>
        <fullName evidence="1">PSII reaction center subunit VI</fullName>
    </alternativeName>
</protein>
<gene>
    <name evidence="1" type="primary">psbF</name>
</gene>
<name>PSBF_NYMOD</name>
<feature type="chain" id="PRO_0000200429" description="Cytochrome b559 subunit beta">
    <location>
        <begin position="1"/>
        <end position="39"/>
    </location>
</feature>
<feature type="transmembrane region" description="Helical" evidence="1">
    <location>
        <begin position="14"/>
        <end position="30"/>
    </location>
</feature>
<feature type="binding site" description="axial binding residue" evidence="1">
    <location>
        <position position="18"/>
    </location>
    <ligand>
        <name>heme</name>
        <dbReference type="ChEBI" id="CHEBI:30413"/>
        <note>ligand shared with alpha subunit</note>
    </ligand>
    <ligandPart>
        <name>Fe</name>
        <dbReference type="ChEBI" id="CHEBI:18248"/>
    </ligandPart>
</feature>
<sequence length="39" mass="4484">MTIDRTYPIFTVRWLAVHGLAVPTVFFLGSISAMQFIQR</sequence>
<dbReference type="EMBL" id="AF188852">
    <property type="protein sequence ID" value="AAF82671.1"/>
    <property type="molecule type" value="Genomic_DNA"/>
</dbReference>
<dbReference type="RefSeq" id="YP_010167560.1">
    <property type="nucleotide sequence ID" value="NC_057567.1"/>
</dbReference>
<dbReference type="SMR" id="Q7IW40"/>
<dbReference type="GeneID" id="67273904"/>
<dbReference type="GO" id="GO:0009535">
    <property type="term" value="C:chloroplast thylakoid membrane"/>
    <property type="evidence" value="ECO:0007669"/>
    <property type="project" value="UniProtKB-SubCell"/>
</dbReference>
<dbReference type="GO" id="GO:0009539">
    <property type="term" value="C:photosystem II reaction center"/>
    <property type="evidence" value="ECO:0007669"/>
    <property type="project" value="InterPro"/>
</dbReference>
<dbReference type="GO" id="GO:0009055">
    <property type="term" value="F:electron transfer activity"/>
    <property type="evidence" value="ECO:0007669"/>
    <property type="project" value="UniProtKB-UniRule"/>
</dbReference>
<dbReference type="GO" id="GO:0020037">
    <property type="term" value="F:heme binding"/>
    <property type="evidence" value="ECO:0007669"/>
    <property type="project" value="InterPro"/>
</dbReference>
<dbReference type="GO" id="GO:0005506">
    <property type="term" value="F:iron ion binding"/>
    <property type="evidence" value="ECO:0007669"/>
    <property type="project" value="UniProtKB-UniRule"/>
</dbReference>
<dbReference type="GO" id="GO:0009767">
    <property type="term" value="P:photosynthetic electron transport chain"/>
    <property type="evidence" value="ECO:0007669"/>
    <property type="project" value="InterPro"/>
</dbReference>
<dbReference type="HAMAP" id="MF_00643">
    <property type="entry name" value="PSII_PsbF"/>
    <property type="match status" value="1"/>
</dbReference>
<dbReference type="InterPro" id="IPR006241">
    <property type="entry name" value="PSII_cyt_b559_bsu"/>
</dbReference>
<dbReference type="InterPro" id="IPR006216">
    <property type="entry name" value="PSII_cyt_b559_CS"/>
</dbReference>
<dbReference type="InterPro" id="IPR013081">
    <property type="entry name" value="PSII_cyt_b559_N"/>
</dbReference>
<dbReference type="NCBIfam" id="TIGR01333">
    <property type="entry name" value="cyt_b559_beta"/>
    <property type="match status" value="1"/>
</dbReference>
<dbReference type="Pfam" id="PF00283">
    <property type="entry name" value="Cytochrom_B559"/>
    <property type="match status" value="1"/>
</dbReference>
<dbReference type="PIRSF" id="PIRSF000037">
    <property type="entry name" value="PsbF"/>
    <property type="match status" value="1"/>
</dbReference>
<dbReference type="SUPFAM" id="SSF161045">
    <property type="entry name" value="Cytochrome b559 subunits"/>
    <property type="match status" value="1"/>
</dbReference>
<dbReference type="PROSITE" id="PS00537">
    <property type="entry name" value="CYTOCHROME_B559"/>
    <property type="match status" value="1"/>
</dbReference>
<proteinExistence type="inferred from homology"/>
<accession>Q7IW40</accession>
<keyword id="KW-0150">Chloroplast</keyword>
<keyword id="KW-0249">Electron transport</keyword>
<keyword id="KW-0349">Heme</keyword>
<keyword id="KW-0408">Iron</keyword>
<keyword id="KW-0472">Membrane</keyword>
<keyword id="KW-0479">Metal-binding</keyword>
<keyword id="KW-0602">Photosynthesis</keyword>
<keyword id="KW-0604">Photosystem II</keyword>
<keyword id="KW-0934">Plastid</keyword>
<keyword id="KW-0793">Thylakoid</keyword>
<keyword id="KW-0812">Transmembrane</keyword>
<keyword id="KW-1133">Transmembrane helix</keyword>
<keyword id="KW-0813">Transport</keyword>
<geneLocation type="chloroplast"/>
<organism>
    <name type="scientific">Nymphaea odorata</name>
    <name type="common">White water lily</name>
    <dbReference type="NCBI Taxonomy" id="4419"/>
    <lineage>
        <taxon>Eukaryota</taxon>
        <taxon>Viridiplantae</taxon>
        <taxon>Streptophyta</taxon>
        <taxon>Embryophyta</taxon>
        <taxon>Tracheophyta</taxon>
        <taxon>Spermatophyta</taxon>
        <taxon>Magnoliopsida</taxon>
        <taxon>Nymphaeales</taxon>
        <taxon>Nymphaeaceae</taxon>
        <taxon>Nymphaea</taxon>
    </lineage>
</organism>
<evidence type="ECO:0000255" key="1">
    <source>
        <dbReference type="HAMAP-Rule" id="MF_00643"/>
    </source>
</evidence>
<comment type="function">
    <text evidence="1">This b-type cytochrome is tightly associated with the reaction center of photosystem II (PSII). PSII is a light-driven water:plastoquinone oxidoreductase that uses light energy to abstract electrons from H(2)O, generating O(2) and a proton gradient subsequently used for ATP formation. It consists of a core antenna complex that captures photons, and an electron transfer chain that converts photonic excitation into a charge separation.</text>
</comment>
<comment type="cofactor">
    <cofactor evidence="1">
        <name>heme b</name>
        <dbReference type="ChEBI" id="CHEBI:60344"/>
    </cofactor>
    <text evidence="1">With its partner (PsbE) binds heme. PSII binds additional chlorophylls, carotenoids and specific lipids.</text>
</comment>
<comment type="subunit">
    <text evidence="1">Heterodimer of an alpha subunit and a beta subunit. PSII is composed of 1 copy each of membrane proteins PsbA, PsbB, PsbC, PsbD, PsbE, PsbF, PsbH, PsbI, PsbJ, PsbK, PsbL, PsbM, PsbT, PsbX, PsbY, PsbZ, Psb30/Ycf12, at least 3 peripheral proteins of the oxygen-evolving complex and a large number of cofactors. It forms dimeric complexes.</text>
</comment>
<comment type="subcellular location">
    <subcellularLocation>
        <location evidence="1">Plastid</location>
        <location evidence="1">Chloroplast thylakoid membrane</location>
        <topology evidence="1">Single-pass membrane protein</topology>
    </subcellularLocation>
</comment>
<comment type="similarity">
    <text evidence="1">Belongs to the PsbE/PsbF family.</text>
</comment>